<comment type="function">
    <text evidence="1">Cell division protein that is part of the divisome complex and is recruited early to the Z-ring. Probably stimulates Z-ring formation, perhaps through the cross-linking of FtsZ protofilaments. Its function overlaps with FtsA.</text>
</comment>
<comment type="subunit">
    <text evidence="1">Homodimer. Interacts with FtsZ.</text>
</comment>
<comment type="subcellular location">
    <subcellularLocation>
        <location evidence="1">Cytoplasm</location>
    </subcellularLocation>
    <text evidence="1">Localizes to the division site, in a FtsZ-dependent manner.</text>
</comment>
<comment type="similarity">
    <text evidence="1">Belongs to the SepF family.</text>
</comment>
<sequence>MSGGFLDKVLNFMGFSEEEEEEYVEKEPAKKVRGKANLVALPGMSMLKMMVFEPRSFDEVQGIADSLKSGSPVVVNLERIDGELGRRIIDFLMGTTYALGGHLHKINPQIYLFAPQNVLIEGEMREFRDKTFFNPFK</sequence>
<reference key="1">
    <citation type="journal article" date="2005" name="PLoS Genet.">
        <title>Life in hot carbon monoxide: the complete genome sequence of Carboxydothermus hydrogenoformans Z-2901.</title>
        <authorList>
            <person name="Wu M."/>
            <person name="Ren Q."/>
            <person name="Durkin A.S."/>
            <person name="Daugherty S.C."/>
            <person name="Brinkac L.M."/>
            <person name="Dodson R.J."/>
            <person name="Madupu R."/>
            <person name="Sullivan S.A."/>
            <person name="Kolonay J.F."/>
            <person name="Nelson W.C."/>
            <person name="Tallon L.J."/>
            <person name="Jones K.M."/>
            <person name="Ulrich L.E."/>
            <person name="Gonzalez J.M."/>
            <person name="Zhulin I.B."/>
            <person name="Robb F.T."/>
            <person name="Eisen J.A."/>
        </authorList>
    </citation>
    <scope>NUCLEOTIDE SEQUENCE [LARGE SCALE GENOMIC DNA]</scope>
    <source>
        <strain>ATCC BAA-161 / DSM 6008 / Z-2901</strain>
    </source>
</reference>
<protein>
    <recommendedName>
        <fullName evidence="1">Cell division protein SepF</fullName>
    </recommendedName>
</protein>
<evidence type="ECO:0000255" key="1">
    <source>
        <dbReference type="HAMAP-Rule" id="MF_01197"/>
    </source>
</evidence>
<accession>Q3AAH3</accession>
<gene>
    <name evidence="1" type="primary">sepF</name>
    <name type="ordered locus">CHY_2042</name>
</gene>
<feature type="chain" id="PRO_0000333990" description="Cell division protein SepF">
    <location>
        <begin position="1"/>
        <end position="137"/>
    </location>
</feature>
<organism>
    <name type="scientific">Carboxydothermus hydrogenoformans (strain ATCC BAA-161 / DSM 6008 / Z-2901)</name>
    <dbReference type="NCBI Taxonomy" id="246194"/>
    <lineage>
        <taxon>Bacteria</taxon>
        <taxon>Bacillati</taxon>
        <taxon>Bacillota</taxon>
        <taxon>Clostridia</taxon>
        <taxon>Thermoanaerobacterales</taxon>
        <taxon>Thermoanaerobacteraceae</taxon>
        <taxon>Carboxydothermus</taxon>
    </lineage>
</organism>
<name>SEPF_CARHZ</name>
<dbReference type="EMBL" id="CP000141">
    <property type="protein sequence ID" value="ABB15922.1"/>
    <property type="molecule type" value="Genomic_DNA"/>
</dbReference>
<dbReference type="RefSeq" id="WP_011344934.1">
    <property type="nucleotide sequence ID" value="NC_007503.1"/>
</dbReference>
<dbReference type="SMR" id="Q3AAH3"/>
<dbReference type="FunCoup" id="Q3AAH3">
    <property type="interactions" value="11"/>
</dbReference>
<dbReference type="STRING" id="246194.CHY_2042"/>
<dbReference type="KEGG" id="chy:CHY_2042"/>
<dbReference type="eggNOG" id="COG1799">
    <property type="taxonomic scope" value="Bacteria"/>
</dbReference>
<dbReference type="HOGENOM" id="CLU_078499_4_1_9"/>
<dbReference type="InParanoid" id="Q3AAH3"/>
<dbReference type="OrthoDB" id="9815206at2"/>
<dbReference type="Proteomes" id="UP000002706">
    <property type="component" value="Chromosome"/>
</dbReference>
<dbReference type="GO" id="GO:0005737">
    <property type="term" value="C:cytoplasm"/>
    <property type="evidence" value="ECO:0007669"/>
    <property type="project" value="UniProtKB-SubCell"/>
</dbReference>
<dbReference type="GO" id="GO:0000917">
    <property type="term" value="P:division septum assembly"/>
    <property type="evidence" value="ECO:0007669"/>
    <property type="project" value="UniProtKB-KW"/>
</dbReference>
<dbReference type="GO" id="GO:0043093">
    <property type="term" value="P:FtsZ-dependent cytokinesis"/>
    <property type="evidence" value="ECO:0007669"/>
    <property type="project" value="UniProtKB-UniRule"/>
</dbReference>
<dbReference type="Gene3D" id="3.30.110.150">
    <property type="entry name" value="SepF-like protein"/>
    <property type="match status" value="1"/>
</dbReference>
<dbReference type="HAMAP" id="MF_01197">
    <property type="entry name" value="SepF"/>
    <property type="match status" value="1"/>
</dbReference>
<dbReference type="InterPro" id="IPR023052">
    <property type="entry name" value="Cell_div_SepF"/>
</dbReference>
<dbReference type="InterPro" id="IPR007561">
    <property type="entry name" value="Cell_div_SepF/SepF-rel"/>
</dbReference>
<dbReference type="InterPro" id="IPR038594">
    <property type="entry name" value="SepF-like_sf"/>
</dbReference>
<dbReference type="PANTHER" id="PTHR35798">
    <property type="entry name" value="CELL DIVISION PROTEIN SEPF"/>
    <property type="match status" value="1"/>
</dbReference>
<dbReference type="PANTHER" id="PTHR35798:SF1">
    <property type="entry name" value="CELL DIVISION PROTEIN SEPF"/>
    <property type="match status" value="1"/>
</dbReference>
<dbReference type="Pfam" id="PF04472">
    <property type="entry name" value="SepF"/>
    <property type="match status" value="1"/>
</dbReference>
<proteinExistence type="inferred from homology"/>
<keyword id="KW-0131">Cell cycle</keyword>
<keyword id="KW-0132">Cell division</keyword>
<keyword id="KW-0963">Cytoplasm</keyword>
<keyword id="KW-1185">Reference proteome</keyword>
<keyword id="KW-0717">Septation</keyword>